<feature type="chain" id="PRO_0000285612" description="Coatomer subunit zeta-3">
    <location>
        <begin position="1"/>
        <end position="181"/>
    </location>
</feature>
<feature type="sequence conflict" description="In Ref. 3; AAL69490." evidence="3" ref="3">
    <original>V</original>
    <variation>I</variation>
    <location>
        <position position="26"/>
    </location>
</feature>
<feature type="sequence conflict" description="In Ref. 4; AAM62512." evidence="3" ref="4">
    <original>A</original>
    <variation>T</variation>
    <location>
        <position position="34"/>
    </location>
</feature>
<feature type="sequence conflict" description="In Ref. 4; AAM62512." evidence="3" ref="4">
    <original>D</original>
    <variation>Y</variation>
    <location>
        <position position="121"/>
    </location>
</feature>
<dbReference type="EMBL" id="AF076275">
    <property type="protein sequence ID" value="AAC28193.1"/>
    <property type="status" value="ALT_SEQ"/>
    <property type="molecule type" value="Genomic_DNA"/>
</dbReference>
<dbReference type="EMBL" id="AL161511">
    <property type="protein sequence ID" value="CAB77977.1"/>
    <property type="status" value="ALT_SEQ"/>
    <property type="molecule type" value="Genomic_DNA"/>
</dbReference>
<dbReference type="EMBL" id="CP002687">
    <property type="protein sequence ID" value="AEE82653.1"/>
    <property type="molecule type" value="Genomic_DNA"/>
</dbReference>
<dbReference type="EMBL" id="AY074506">
    <property type="protein sequence ID" value="AAL69490.1"/>
    <property type="molecule type" value="mRNA"/>
</dbReference>
<dbReference type="EMBL" id="AY150422">
    <property type="protein sequence ID" value="AAN12967.1"/>
    <property type="molecule type" value="mRNA"/>
</dbReference>
<dbReference type="EMBL" id="AY085280">
    <property type="protein sequence ID" value="AAM62512.1"/>
    <property type="molecule type" value="mRNA"/>
</dbReference>
<dbReference type="EMBL" id="AK227943">
    <property type="protein sequence ID" value="BAE99911.1"/>
    <property type="molecule type" value="mRNA"/>
</dbReference>
<dbReference type="PIR" id="T01831">
    <property type="entry name" value="T01831"/>
</dbReference>
<dbReference type="RefSeq" id="NP_567337.1">
    <property type="nucleotide sequence ID" value="NM_116921.5"/>
</dbReference>
<dbReference type="SMR" id="Q8H1F4"/>
<dbReference type="BioGRID" id="11711">
    <property type="interactions" value="10"/>
</dbReference>
<dbReference type="FunCoup" id="Q8H1F4">
    <property type="interactions" value="3462"/>
</dbReference>
<dbReference type="IntAct" id="Q8H1F4">
    <property type="interactions" value="5"/>
</dbReference>
<dbReference type="STRING" id="3702.Q8H1F4"/>
<dbReference type="iPTMnet" id="Q8H1F4"/>
<dbReference type="PaxDb" id="3702-AT4G08520.1"/>
<dbReference type="ProteomicsDB" id="241177"/>
<dbReference type="EnsemblPlants" id="AT4G08520.1">
    <property type="protein sequence ID" value="AT4G08520.1"/>
    <property type="gene ID" value="AT4G08520"/>
</dbReference>
<dbReference type="GeneID" id="826411"/>
<dbReference type="Gramene" id="AT4G08520.1">
    <property type="protein sequence ID" value="AT4G08520.1"/>
    <property type="gene ID" value="AT4G08520"/>
</dbReference>
<dbReference type="KEGG" id="ath:AT4G08520"/>
<dbReference type="Araport" id="AT4G08520"/>
<dbReference type="TAIR" id="AT4G08520"/>
<dbReference type="eggNOG" id="KOG3343">
    <property type="taxonomic scope" value="Eukaryota"/>
</dbReference>
<dbReference type="HOGENOM" id="CLU_086803_1_1_1"/>
<dbReference type="InParanoid" id="Q8H1F4"/>
<dbReference type="OMA" id="NELMLHS"/>
<dbReference type="PhylomeDB" id="Q8H1F4"/>
<dbReference type="PRO" id="PR:Q8H1F4"/>
<dbReference type="Proteomes" id="UP000006548">
    <property type="component" value="Chromosome 4"/>
</dbReference>
<dbReference type="ExpressionAtlas" id="Q8H1F4">
    <property type="expression patterns" value="baseline and differential"/>
</dbReference>
<dbReference type="GO" id="GO:0030126">
    <property type="term" value="C:COPI vesicle coat"/>
    <property type="evidence" value="ECO:0007669"/>
    <property type="project" value="InterPro"/>
</dbReference>
<dbReference type="GO" id="GO:0005829">
    <property type="term" value="C:cytosol"/>
    <property type="evidence" value="ECO:0007005"/>
    <property type="project" value="TAIR"/>
</dbReference>
<dbReference type="GO" id="GO:0000139">
    <property type="term" value="C:Golgi membrane"/>
    <property type="evidence" value="ECO:0007669"/>
    <property type="project" value="UniProtKB-SubCell"/>
</dbReference>
<dbReference type="GO" id="GO:0005886">
    <property type="term" value="C:plasma membrane"/>
    <property type="evidence" value="ECO:0007005"/>
    <property type="project" value="TAIR"/>
</dbReference>
<dbReference type="GO" id="GO:0015031">
    <property type="term" value="P:protein transport"/>
    <property type="evidence" value="ECO:0007669"/>
    <property type="project" value="UniProtKB-KW"/>
</dbReference>
<dbReference type="GO" id="GO:0006890">
    <property type="term" value="P:retrograde vesicle-mediated transport, Golgi to endoplasmic reticulum"/>
    <property type="evidence" value="ECO:0007669"/>
    <property type="project" value="InterPro"/>
</dbReference>
<dbReference type="CDD" id="cd14829">
    <property type="entry name" value="Zeta-COP"/>
    <property type="match status" value="1"/>
</dbReference>
<dbReference type="FunFam" id="3.30.450.60:FF:000014">
    <property type="entry name" value="Coatomer subunit zeta-2"/>
    <property type="match status" value="1"/>
</dbReference>
<dbReference type="Gene3D" id="3.30.450.60">
    <property type="match status" value="1"/>
</dbReference>
<dbReference type="InterPro" id="IPR022775">
    <property type="entry name" value="AP_mu_sigma_su"/>
</dbReference>
<dbReference type="InterPro" id="IPR039652">
    <property type="entry name" value="Coatomer_zeta"/>
</dbReference>
<dbReference type="InterPro" id="IPR011012">
    <property type="entry name" value="Longin-like_dom_sf"/>
</dbReference>
<dbReference type="PANTHER" id="PTHR11043:SF28">
    <property type="entry name" value="COATOMER SUBUNIT ZETA-3"/>
    <property type="match status" value="1"/>
</dbReference>
<dbReference type="PANTHER" id="PTHR11043">
    <property type="entry name" value="ZETA-COAT PROTEIN"/>
    <property type="match status" value="1"/>
</dbReference>
<dbReference type="Pfam" id="PF01217">
    <property type="entry name" value="Clat_adaptor_s"/>
    <property type="match status" value="1"/>
</dbReference>
<dbReference type="SUPFAM" id="SSF64356">
    <property type="entry name" value="SNARE-like"/>
    <property type="match status" value="1"/>
</dbReference>
<organism>
    <name type="scientific">Arabidopsis thaliana</name>
    <name type="common">Mouse-ear cress</name>
    <dbReference type="NCBI Taxonomy" id="3702"/>
    <lineage>
        <taxon>Eukaryota</taxon>
        <taxon>Viridiplantae</taxon>
        <taxon>Streptophyta</taxon>
        <taxon>Embryophyta</taxon>
        <taxon>Tracheophyta</taxon>
        <taxon>Spermatophyta</taxon>
        <taxon>Magnoliopsida</taxon>
        <taxon>eudicotyledons</taxon>
        <taxon>Gunneridae</taxon>
        <taxon>Pentapetalae</taxon>
        <taxon>rosids</taxon>
        <taxon>malvids</taxon>
        <taxon>Brassicales</taxon>
        <taxon>Brassicaceae</taxon>
        <taxon>Camelineae</taxon>
        <taxon>Arabidopsis</taxon>
    </lineage>
</organism>
<comment type="function">
    <text evidence="2">The coatomer is a cytosolic protein complex that binds to dilysine motifs and reversibly associates with Golgi non-clathrin-coated vesicles, which further mediate biosynthetic protein transport from the ER, via the Golgi up to the trans Golgi network. Coatomer complex is required for budding from Golgi membranes, and is essential for the retrograde Golgi-to-ER transport of dilysine-tagged proteins (By similarity). The zeta subunit may be involved in regulating the coat assembly and, hence, the rate of biosynthetic protein transport due to its association-dissociation properties with the coatomer complex (By similarity).</text>
</comment>
<comment type="subunit">
    <text evidence="1">Oligomeric complex that consists of at least the alpha, beta, beta', gamma, delta, epsilon and zeta subunits.</text>
</comment>
<comment type="subcellular location">
    <subcellularLocation>
        <location evidence="1">Cytoplasm</location>
    </subcellularLocation>
    <subcellularLocation>
        <location evidence="1">Golgi apparatus membrane</location>
        <topology evidence="1">Peripheral membrane protein</topology>
        <orientation evidence="1">Cytoplasmic side</orientation>
    </subcellularLocation>
    <subcellularLocation>
        <location evidence="1">Cytoplasmic vesicle</location>
        <location evidence="1">COPI-coated vesicle membrane</location>
        <topology evidence="1">Peripheral membrane protein</topology>
        <orientation evidence="1">Cytoplasmic side</orientation>
    </subcellularLocation>
    <text evidence="1">The coatomer is cytoplasmic or polymerized on the cytoplasmic side of the Golgi, as well as on the vesicles/buds originating from it.</text>
</comment>
<comment type="similarity">
    <text evidence="3">Belongs to the adaptor complexes small subunit family.</text>
</comment>
<comment type="sequence caution" evidence="3">
    <conflict type="erroneous gene model prediction">
        <sequence resource="EMBL-CDS" id="AAC28193"/>
    </conflict>
</comment>
<comment type="sequence caution" evidence="3">
    <conflict type="erroneous gene model prediction">
        <sequence resource="EMBL-CDS" id="CAB77977"/>
    </conflict>
</comment>
<protein>
    <recommendedName>
        <fullName>Coatomer subunit zeta-3</fullName>
    </recommendedName>
    <alternativeName>
        <fullName>Zeta-3-coat protein</fullName>
    </alternativeName>
    <alternativeName>
        <fullName>Zeta-COP 3</fullName>
    </alternativeName>
</protein>
<evidence type="ECO:0000250" key="1"/>
<evidence type="ECO:0000250" key="2">
    <source>
        <dbReference type="UniProtKB" id="P53600"/>
    </source>
</evidence>
<evidence type="ECO:0000305" key="3"/>
<accession>Q8H1F4</accession>
<accession>O81468</accession>
<accession>Q8LER5</accession>
<accession>Q8RY90</accession>
<sequence length="181" mass="19877">MAGTNDSCPLVKNILLLDSEGKRVAVKYYSDDWATNASKLAFEKYVFSKTSKTNARTEAEITLLESNIVVYKFAQDLHFFVTGGENENELVLSSVLQGFFDAVALLLRNNVEKMEALENLDLIFLCLDEMVDQGMVLETDANVIAGKVAMQSAEASGSLSEQTLTQALATAREHLARSLLT</sequence>
<proteinExistence type="evidence at transcript level"/>
<name>COPZ3_ARATH</name>
<gene>
    <name type="ordered locus">At4g08520</name>
    <name type="ORF">T15F16.12</name>
</gene>
<keyword id="KW-0963">Cytoplasm</keyword>
<keyword id="KW-0968">Cytoplasmic vesicle</keyword>
<keyword id="KW-0931">ER-Golgi transport</keyword>
<keyword id="KW-0333">Golgi apparatus</keyword>
<keyword id="KW-0472">Membrane</keyword>
<keyword id="KW-0653">Protein transport</keyword>
<keyword id="KW-1185">Reference proteome</keyword>
<keyword id="KW-0813">Transport</keyword>
<reference key="1">
    <citation type="journal article" date="1999" name="Nature">
        <title>Sequence and analysis of chromosome 4 of the plant Arabidopsis thaliana.</title>
        <authorList>
            <person name="Mayer K.F.X."/>
            <person name="Schueller C."/>
            <person name="Wambutt R."/>
            <person name="Murphy G."/>
            <person name="Volckaert G."/>
            <person name="Pohl T."/>
            <person name="Duesterhoeft A."/>
            <person name="Stiekema W."/>
            <person name="Entian K.-D."/>
            <person name="Terryn N."/>
            <person name="Harris B."/>
            <person name="Ansorge W."/>
            <person name="Brandt P."/>
            <person name="Grivell L.A."/>
            <person name="Rieger M."/>
            <person name="Weichselgartner M."/>
            <person name="de Simone V."/>
            <person name="Obermaier B."/>
            <person name="Mache R."/>
            <person name="Mueller M."/>
            <person name="Kreis M."/>
            <person name="Delseny M."/>
            <person name="Puigdomenech P."/>
            <person name="Watson M."/>
            <person name="Schmidtheini T."/>
            <person name="Reichert B."/>
            <person name="Portetelle D."/>
            <person name="Perez-Alonso M."/>
            <person name="Boutry M."/>
            <person name="Bancroft I."/>
            <person name="Vos P."/>
            <person name="Hoheisel J."/>
            <person name="Zimmermann W."/>
            <person name="Wedler H."/>
            <person name="Ridley P."/>
            <person name="Langham S.-A."/>
            <person name="McCullagh B."/>
            <person name="Bilham L."/>
            <person name="Robben J."/>
            <person name="van der Schueren J."/>
            <person name="Grymonprez B."/>
            <person name="Chuang Y.-J."/>
            <person name="Vandenbussche F."/>
            <person name="Braeken M."/>
            <person name="Weltjens I."/>
            <person name="Voet M."/>
            <person name="Bastiaens I."/>
            <person name="Aert R."/>
            <person name="Defoor E."/>
            <person name="Weitzenegger T."/>
            <person name="Bothe G."/>
            <person name="Ramsperger U."/>
            <person name="Hilbert H."/>
            <person name="Braun M."/>
            <person name="Holzer E."/>
            <person name="Brandt A."/>
            <person name="Peters S."/>
            <person name="van Staveren M."/>
            <person name="Dirkse W."/>
            <person name="Mooijman P."/>
            <person name="Klein Lankhorst R."/>
            <person name="Rose M."/>
            <person name="Hauf J."/>
            <person name="Koetter P."/>
            <person name="Berneiser S."/>
            <person name="Hempel S."/>
            <person name="Feldpausch M."/>
            <person name="Lamberth S."/>
            <person name="Van den Daele H."/>
            <person name="De Keyser A."/>
            <person name="Buysshaert C."/>
            <person name="Gielen J."/>
            <person name="Villarroel R."/>
            <person name="De Clercq R."/>
            <person name="van Montagu M."/>
            <person name="Rogers J."/>
            <person name="Cronin A."/>
            <person name="Quail M.A."/>
            <person name="Bray-Allen S."/>
            <person name="Clark L."/>
            <person name="Doggett J."/>
            <person name="Hall S."/>
            <person name="Kay M."/>
            <person name="Lennard N."/>
            <person name="McLay K."/>
            <person name="Mayes R."/>
            <person name="Pettett A."/>
            <person name="Rajandream M.A."/>
            <person name="Lyne M."/>
            <person name="Benes V."/>
            <person name="Rechmann S."/>
            <person name="Borkova D."/>
            <person name="Bloecker H."/>
            <person name="Scharfe M."/>
            <person name="Grimm M."/>
            <person name="Loehnert T.-H."/>
            <person name="Dose S."/>
            <person name="de Haan M."/>
            <person name="Maarse A.C."/>
            <person name="Schaefer M."/>
            <person name="Mueller-Auer S."/>
            <person name="Gabel C."/>
            <person name="Fuchs M."/>
            <person name="Fartmann B."/>
            <person name="Granderath K."/>
            <person name="Dauner D."/>
            <person name="Herzl A."/>
            <person name="Neumann S."/>
            <person name="Argiriou A."/>
            <person name="Vitale D."/>
            <person name="Liguori R."/>
            <person name="Piravandi E."/>
            <person name="Massenet O."/>
            <person name="Quigley F."/>
            <person name="Clabauld G."/>
            <person name="Muendlein A."/>
            <person name="Felber R."/>
            <person name="Schnabl S."/>
            <person name="Hiller R."/>
            <person name="Schmidt W."/>
            <person name="Lecharny A."/>
            <person name="Aubourg S."/>
            <person name="Chefdor F."/>
            <person name="Cooke R."/>
            <person name="Berger C."/>
            <person name="Monfort A."/>
            <person name="Casacuberta E."/>
            <person name="Gibbons T."/>
            <person name="Weber N."/>
            <person name="Vandenbol M."/>
            <person name="Bargues M."/>
            <person name="Terol J."/>
            <person name="Torres A."/>
            <person name="Perez-Perez A."/>
            <person name="Purnelle B."/>
            <person name="Bent E."/>
            <person name="Johnson S."/>
            <person name="Tacon D."/>
            <person name="Jesse T."/>
            <person name="Heijnen L."/>
            <person name="Schwarz S."/>
            <person name="Scholler P."/>
            <person name="Heber S."/>
            <person name="Francs P."/>
            <person name="Bielke C."/>
            <person name="Frishman D."/>
            <person name="Haase D."/>
            <person name="Lemcke K."/>
            <person name="Mewes H.-W."/>
            <person name="Stocker S."/>
            <person name="Zaccaria P."/>
            <person name="Bevan M."/>
            <person name="Wilson R.K."/>
            <person name="de la Bastide M."/>
            <person name="Habermann K."/>
            <person name="Parnell L."/>
            <person name="Dedhia N."/>
            <person name="Gnoj L."/>
            <person name="Schutz K."/>
            <person name="Huang E."/>
            <person name="Spiegel L."/>
            <person name="Sekhon M."/>
            <person name="Murray J."/>
            <person name="Sheet P."/>
            <person name="Cordes M."/>
            <person name="Abu-Threideh J."/>
            <person name="Stoneking T."/>
            <person name="Kalicki J."/>
            <person name="Graves T."/>
            <person name="Harmon G."/>
            <person name="Edwards J."/>
            <person name="Latreille P."/>
            <person name="Courtney L."/>
            <person name="Cloud J."/>
            <person name="Abbott A."/>
            <person name="Scott K."/>
            <person name="Johnson D."/>
            <person name="Minx P."/>
            <person name="Bentley D."/>
            <person name="Fulton B."/>
            <person name="Miller N."/>
            <person name="Greco T."/>
            <person name="Kemp K."/>
            <person name="Kramer J."/>
            <person name="Fulton L."/>
            <person name="Mardis E."/>
            <person name="Dante M."/>
            <person name="Pepin K."/>
            <person name="Hillier L.W."/>
            <person name="Nelson J."/>
            <person name="Spieth J."/>
            <person name="Ryan E."/>
            <person name="Andrews S."/>
            <person name="Geisel C."/>
            <person name="Layman D."/>
            <person name="Du H."/>
            <person name="Ali J."/>
            <person name="Berghoff A."/>
            <person name="Jones K."/>
            <person name="Drone K."/>
            <person name="Cotton M."/>
            <person name="Joshu C."/>
            <person name="Antonoiu B."/>
            <person name="Zidanic M."/>
            <person name="Strong C."/>
            <person name="Sun H."/>
            <person name="Lamar B."/>
            <person name="Yordan C."/>
            <person name="Ma P."/>
            <person name="Zhong J."/>
            <person name="Preston R."/>
            <person name="Vil D."/>
            <person name="Shekher M."/>
            <person name="Matero A."/>
            <person name="Shah R."/>
            <person name="Swaby I.K."/>
            <person name="O'Shaughnessy A."/>
            <person name="Rodriguez M."/>
            <person name="Hoffman J."/>
            <person name="Till S."/>
            <person name="Granat S."/>
            <person name="Shohdy N."/>
            <person name="Hasegawa A."/>
            <person name="Hameed A."/>
            <person name="Lodhi M."/>
            <person name="Johnson A."/>
            <person name="Chen E."/>
            <person name="Marra M.A."/>
            <person name="Martienssen R."/>
            <person name="McCombie W.R."/>
        </authorList>
    </citation>
    <scope>NUCLEOTIDE SEQUENCE [LARGE SCALE GENOMIC DNA]</scope>
    <source>
        <strain>cv. Columbia</strain>
    </source>
</reference>
<reference key="2">
    <citation type="journal article" date="2017" name="Plant J.">
        <title>Araport11: a complete reannotation of the Arabidopsis thaliana reference genome.</title>
        <authorList>
            <person name="Cheng C.Y."/>
            <person name="Krishnakumar V."/>
            <person name="Chan A.P."/>
            <person name="Thibaud-Nissen F."/>
            <person name="Schobel S."/>
            <person name="Town C.D."/>
        </authorList>
    </citation>
    <scope>GENOME REANNOTATION</scope>
    <source>
        <strain>cv. Columbia</strain>
    </source>
</reference>
<reference key="3">
    <citation type="journal article" date="2003" name="Science">
        <title>Empirical analysis of transcriptional activity in the Arabidopsis genome.</title>
        <authorList>
            <person name="Yamada K."/>
            <person name="Lim J."/>
            <person name="Dale J.M."/>
            <person name="Chen H."/>
            <person name="Shinn P."/>
            <person name="Palm C.J."/>
            <person name="Southwick A.M."/>
            <person name="Wu H.C."/>
            <person name="Kim C.J."/>
            <person name="Nguyen M."/>
            <person name="Pham P.K."/>
            <person name="Cheuk R.F."/>
            <person name="Karlin-Newmann G."/>
            <person name="Liu S.X."/>
            <person name="Lam B."/>
            <person name="Sakano H."/>
            <person name="Wu T."/>
            <person name="Yu G."/>
            <person name="Miranda M."/>
            <person name="Quach H.L."/>
            <person name="Tripp M."/>
            <person name="Chang C.H."/>
            <person name="Lee J.M."/>
            <person name="Toriumi M.J."/>
            <person name="Chan M.M."/>
            <person name="Tang C.C."/>
            <person name="Onodera C.S."/>
            <person name="Deng J.M."/>
            <person name="Akiyama K."/>
            <person name="Ansari Y."/>
            <person name="Arakawa T."/>
            <person name="Banh J."/>
            <person name="Banno F."/>
            <person name="Bowser L."/>
            <person name="Brooks S.Y."/>
            <person name="Carninci P."/>
            <person name="Chao Q."/>
            <person name="Choy N."/>
            <person name="Enju A."/>
            <person name="Goldsmith A.D."/>
            <person name="Gurjal M."/>
            <person name="Hansen N.F."/>
            <person name="Hayashizaki Y."/>
            <person name="Johnson-Hopson C."/>
            <person name="Hsuan V.W."/>
            <person name="Iida K."/>
            <person name="Karnes M."/>
            <person name="Khan S."/>
            <person name="Koesema E."/>
            <person name="Ishida J."/>
            <person name="Jiang P.X."/>
            <person name="Jones T."/>
            <person name="Kawai J."/>
            <person name="Kamiya A."/>
            <person name="Meyers C."/>
            <person name="Nakajima M."/>
            <person name="Narusaka M."/>
            <person name="Seki M."/>
            <person name="Sakurai T."/>
            <person name="Satou M."/>
            <person name="Tamse R."/>
            <person name="Vaysberg M."/>
            <person name="Wallender E.K."/>
            <person name="Wong C."/>
            <person name="Yamamura Y."/>
            <person name="Yuan S."/>
            <person name="Shinozaki K."/>
            <person name="Davis R.W."/>
            <person name="Theologis A."/>
            <person name="Ecker J.R."/>
        </authorList>
    </citation>
    <scope>NUCLEOTIDE SEQUENCE [LARGE SCALE MRNA]</scope>
    <source>
        <strain>cv. Columbia</strain>
    </source>
</reference>
<reference key="4">
    <citation type="submission" date="2002-03" db="EMBL/GenBank/DDBJ databases">
        <title>Full-length cDNA from Arabidopsis thaliana.</title>
        <authorList>
            <person name="Brover V.V."/>
            <person name="Troukhan M.E."/>
            <person name="Alexandrov N.A."/>
            <person name="Lu Y.-P."/>
            <person name="Flavell R.B."/>
            <person name="Feldmann K.A."/>
        </authorList>
    </citation>
    <scope>NUCLEOTIDE SEQUENCE [LARGE SCALE MRNA]</scope>
</reference>
<reference key="5">
    <citation type="submission" date="2006-07" db="EMBL/GenBank/DDBJ databases">
        <title>Large-scale analysis of RIKEN Arabidopsis full-length (RAFL) cDNAs.</title>
        <authorList>
            <person name="Totoki Y."/>
            <person name="Seki M."/>
            <person name="Ishida J."/>
            <person name="Nakajima M."/>
            <person name="Enju A."/>
            <person name="Kamiya A."/>
            <person name="Narusaka M."/>
            <person name="Shin-i T."/>
            <person name="Nakagawa M."/>
            <person name="Sakamoto N."/>
            <person name="Oishi K."/>
            <person name="Kohara Y."/>
            <person name="Kobayashi M."/>
            <person name="Toyoda A."/>
            <person name="Sakaki Y."/>
            <person name="Sakurai T."/>
            <person name="Iida K."/>
            <person name="Akiyama K."/>
            <person name="Satou M."/>
            <person name="Toyoda T."/>
            <person name="Konagaya A."/>
            <person name="Carninci P."/>
            <person name="Kawai J."/>
            <person name="Hayashizaki Y."/>
            <person name="Shinozaki K."/>
        </authorList>
    </citation>
    <scope>NUCLEOTIDE SEQUENCE [LARGE SCALE MRNA]</scope>
    <source>
        <strain>cv. Columbia</strain>
    </source>
</reference>